<comment type="function">
    <text evidence="1">Catalyzes the hydrolysis of UDP-3-O-myristoyl-N-acetylglucosamine to form UDP-3-O-myristoylglucosamine and acetate, the committed step in lipid A biosynthesis.</text>
</comment>
<comment type="catalytic activity">
    <reaction evidence="1">
        <text>a UDP-3-O-[(3R)-3-hydroxyacyl]-N-acetyl-alpha-D-glucosamine + H2O = a UDP-3-O-[(3R)-3-hydroxyacyl]-alpha-D-glucosamine + acetate</text>
        <dbReference type="Rhea" id="RHEA:67816"/>
        <dbReference type="ChEBI" id="CHEBI:15377"/>
        <dbReference type="ChEBI" id="CHEBI:30089"/>
        <dbReference type="ChEBI" id="CHEBI:137740"/>
        <dbReference type="ChEBI" id="CHEBI:173225"/>
        <dbReference type="EC" id="3.5.1.108"/>
    </reaction>
</comment>
<comment type="cofactor">
    <cofactor evidence="1">
        <name>Zn(2+)</name>
        <dbReference type="ChEBI" id="CHEBI:29105"/>
    </cofactor>
</comment>
<comment type="pathway">
    <text evidence="1">Glycolipid biosynthesis; lipid IV(A) biosynthesis; lipid IV(A) from (3R)-3-hydroxytetradecanoyl-[acyl-carrier-protein] and UDP-N-acetyl-alpha-D-glucosamine: step 2/6.</text>
</comment>
<comment type="similarity">
    <text evidence="1">Belongs to the LpxC family.</text>
</comment>
<keyword id="KW-0378">Hydrolase</keyword>
<keyword id="KW-0441">Lipid A biosynthesis</keyword>
<keyword id="KW-0444">Lipid biosynthesis</keyword>
<keyword id="KW-0443">Lipid metabolism</keyword>
<keyword id="KW-0479">Metal-binding</keyword>
<keyword id="KW-0862">Zinc</keyword>
<feature type="chain" id="PRO_1000013208" description="UDP-3-O-acyl-N-acetylglucosamine deacetylase">
    <location>
        <begin position="1"/>
        <end position="305"/>
    </location>
</feature>
<feature type="active site" description="Proton donor" evidence="1">
    <location>
        <position position="265"/>
    </location>
</feature>
<feature type="binding site" evidence="1">
    <location>
        <position position="79"/>
    </location>
    <ligand>
        <name>Zn(2+)</name>
        <dbReference type="ChEBI" id="CHEBI:29105"/>
    </ligand>
</feature>
<feature type="binding site" evidence="1">
    <location>
        <position position="238"/>
    </location>
    <ligand>
        <name>Zn(2+)</name>
        <dbReference type="ChEBI" id="CHEBI:29105"/>
    </ligand>
</feature>
<feature type="binding site" evidence="1">
    <location>
        <position position="242"/>
    </location>
    <ligand>
        <name>Zn(2+)</name>
        <dbReference type="ChEBI" id="CHEBI:29105"/>
    </ligand>
</feature>
<reference key="1">
    <citation type="journal article" date="2007" name="Genome Biol.">
        <title>Characterization and modeling of the Haemophilus influenzae core and supragenomes based on the complete genomic sequences of Rd and 12 clinical nontypeable strains.</title>
        <authorList>
            <person name="Hogg J.S."/>
            <person name="Hu F.Z."/>
            <person name="Janto B."/>
            <person name="Boissy R."/>
            <person name="Hayes J."/>
            <person name="Keefe R."/>
            <person name="Post J.C."/>
            <person name="Ehrlich G.D."/>
        </authorList>
    </citation>
    <scope>NUCLEOTIDE SEQUENCE [LARGE SCALE GENOMIC DNA]</scope>
    <source>
        <strain>PittGG</strain>
    </source>
</reference>
<protein>
    <recommendedName>
        <fullName evidence="1">UDP-3-O-acyl-N-acetylglucosamine deacetylase</fullName>
        <shortName evidence="1">UDP-3-O-acyl-GlcNAc deacetylase</shortName>
        <ecNumber evidence="1">3.5.1.108</ecNumber>
    </recommendedName>
    <alternativeName>
        <fullName evidence="1">UDP-3-O-[R-3-hydroxymyristoyl]-N-acetylglucosamine deacetylase</fullName>
    </alternativeName>
</protein>
<gene>
    <name evidence="1" type="primary">lpxC</name>
    <name type="ordered locus">CGSHiGG_09380</name>
</gene>
<proteinExistence type="inferred from homology"/>
<evidence type="ECO:0000255" key="1">
    <source>
        <dbReference type="HAMAP-Rule" id="MF_00388"/>
    </source>
</evidence>
<name>LPXC_HAEIG</name>
<organism>
    <name type="scientific">Haemophilus influenzae (strain PittGG)</name>
    <dbReference type="NCBI Taxonomy" id="374931"/>
    <lineage>
        <taxon>Bacteria</taxon>
        <taxon>Pseudomonadati</taxon>
        <taxon>Pseudomonadota</taxon>
        <taxon>Gammaproteobacteria</taxon>
        <taxon>Pasteurellales</taxon>
        <taxon>Pasteurellaceae</taxon>
        <taxon>Haemophilus</taxon>
    </lineage>
</organism>
<sequence>MIKQRTLKQSIKVTGVGLHSGEKVTLTLRPAMPNTGVVYYRTDLNPTVAFPADPNSVRDTMLCTALINEQGVRISTVEHLNAALAGLGIDNIIIEVDAPEIPIMDGSASPFIYLLLDAGIEEQNAAKKFIRIKEYVRVEDGDKWAEFKPYNGFRLDFTIDFDHPAIGKDVRNYEMNFSAQAFVHQISRARTFGFMKDIEYLQSQGLVLGGSLDNAIVLDDYRILNEDGLRFKDELVRHKMLDAIGDLYMAGYNIIGDFKAYKSGHGLNNKLLRAVLANQEAWEFVTFEDKEQVPQGYVAPVQVLI</sequence>
<dbReference type="EC" id="3.5.1.108" evidence="1"/>
<dbReference type="EMBL" id="CP000672">
    <property type="protein sequence ID" value="ABR00674.1"/>
    <property type="molecule type" value="Genomic_DNA"/>
</dbReference>
<dbReference type="SMR" id="A5UIR8"/>
<dbReference type="KEGG" id="hiq:CGSHiGG_09380"/>
<dbReference type="HOGENOM" id="CLU_046528_1_0_6"/>
<dbReference type="UniPathway" id="UPA00359">
    <property type="reaction ID" value="UER00478"/>
</dbReference>
<dbReference type="Proteomes" id="UP000001990">
    <property type="component" value="Chromosome"/>
</dbReference>
<dbReference type="GO" id="GO:0016020">
    <property type="term" value="C:membrane"/>
    <property type="evidence" value="ECO:0007669"/>
    <property type="project" value="GOC"/>
</dbReference>
<dbReference type="GO" id="GO:0046872">
    <property type="term" value="F:metal ion binding"/>
    <property type="evidence" value="ECO:0007669"/>
    <property type="project" value="UniProtKB-KW"/>
</dbReference>
<dbReference type="GO" id="GO:0103117">
    <property type="term" value="F:UDP-3-O-acyl-N-acetylglucosamine deacetylase activity"/>
    <property type="evidence" value="ECO:0007669"/>
    <property type="project" value="UniProtKB-UniRule"/>
</dbReference>
<dbReference type="GO" id="GO:0009245">
    <property type="term" value="P:lipid A biosynthetic process"/>
    <property type="evidence" value="ECO:0007669"/>
    <property type="project" value="UniProtKB-UniRule"/>
</dbReference>
<dbReference type="FunFam" id="3.30.1700.10:FF:000001">
    <property type="entry name" value="UDP-3-O-acyl-N-acetylglucosamine deacetylase"/>
    <property type="match status" value="1"/>
</dbReference>
<dbReference type="Gene3D" id="3.30.230.20">
    <property type="entry name" value="lpxc deacetylase, domain 1"/>
    <property type="match status" value="1"/>
</dbReference>
<dbReference type="Gene3D" id="3.30.1700.10">
    <property type="entry name" value="lpxc deacetylase, domain 2"/>
    <property type="match status" value="1"/>
</dbReference>
<dbReference type="HAMAP" id="MF_00388">
    <property type="entry name" value="LpxC"/>
    <property type="match status" value="1"/>
</dbReference>
<dbReference type="InterPro" id="IPR020568">
    <property type="entry name" value="Ribosomal_Su5_D2-typ_SF"/>
</dbReference>
<dbReference type="InterPro" id="IPR004463">
    <property type="entry name" value="UDP-acyl_GlcNac_deAcase"/>
</dbReference>
<dbReference type="InterPro" id="IPR011334">
    <property type="entry name" value="UDP-acyl_GlcNac_deAcase_C"/>
</dbReference>
<dbReference type="InterPro" id="IPR015870">
    <property type="entry name" value="UDP-acyl_N-AcGlcN_deAcase_N"/>
</dbReference>
<dbReference type="NCBIfam" id="TIGR00325">
    <property type="entry name" value="lpxC"/>
    <property type="match status" value="1"/>
</dbReference>
<dbReference type="PANTHER" id="PTHR33694">
    <property type="entry name" value="UDP-3-O-ACYL-N-ACETYLGLUCOSAMINE DEACETYLASE 1, MITOCHONDRIAL-RELATED"/>
    <property type="match status" value="1"/>
</dbReference>
<dbReference type="PANTHER" id="PTHR33694:SF1">
    <property type="entry name" value="UDP-3-O-ACYL-N-ACETYLGLUCOSAMINE DEACETYLASE 1, MITOCHONDRIAL-RELATED"/>
    <property type="match status" value="1"/>
</dbReference>
<dbReference type="Pfam" id="PF03331">
    <property type="entry name" value="LpxC"/>
    <property type="match status" value="1"/>
</dbReference>
<dbReference type="SUPFAM" id="SSF54211">
    <property type="entry name" value="Ribosomal protein S5 domain 2-like"/>
    <property type="match status" value="2"/>
</dbReference>
<accession>A5UIR8</accession>